<reference key="1">
    <citation type="submission" date="2016-12" db="EMBL/GenBank/DDBJ databases">
        <title>The genomes of Aspergillus section Nigri reveals drivers in fungal speciation.</title>
        <authorList>
            <consortium name="DOE Joint Genome Institute"/>
            <person name="Vesth T.C."/>
            <person name="Nybo J."/>
            <person name="Theobald S."/>
            <person name="Brandl J."/>
            <person name="Frisvad J.C."/>
            <person name="Nielsen K.F."/>
            <person name="Lyhne E.K."/>
            <person name="Kogle M.E."/>
            <person name="Kuo A."/>
            <person name="Riley R."/>
            <person name="Clum A."/>
            <person name="Nolan M."/>
            <person name="Lipzen A."/>
            <person name="Salamov A."/>
            <person name="Henrissat B."/>
            <person name="Wiebenga A."/>
            <person name="De Vries R.P."/>
            <person name="Grigoriev I.V."/>
            <person name="Mortensen U.H."/>
            <person name="Andersen M.R."/>
            <person name="Baker S.E."/>
        </authorList>
    </citation>
    <scope>NUCLEOTIDE SEQUENCE [LARGE SCALE GENOMIC DNA]</scope>
    <source>
        <strain>IBT 28561</strain>
    </source>
</reference>
<reference key="2">
    <citation type="journal article" date="2024" name="Angew. Chem. Int. Ed.">
        <title>A Cytochrome P450 Catalyzes Oxidative Coupling Formation of Insecticidal Dimeric Indole Piperazine Alkaloids.</title>
        <authorList>
            <person name="He Q."/>
            <person name="Zhang H.R."/>
            <person name="Zou Y."/>
        </authorList>
    </citation>
    <scope>FUNCTION</scope>
    <scope>CATALYTIC ACTIVITY</scope>
    <scope>BIOTECHNOLOGY</scope>
    <scope>PATHWAY</scope>
</reference>
<evidence type="ECO:0000256" key="1">
    <source>
        <dbReference type="SAM" id="MobiDB-lite"/>
    </source>
</evidence>
<evidence type="ECO:0000269" key="2">
    <source>
    </source>
</evidence>
<evidence type="ECO:0000303" key="3">
    <source>
    </source>
</evidence>
<evidence type="ECO:0000305" key="4"/>
<organism>
    <name type="scientific">Aspergillus campestris (strain IBT 28561)</name>
    <dbReference type="NCBI Taxonomy" id="1392248"/>
    <lineage>
        <taxon>Eukaryota</taxon>
        <taxon>Fungi</taxon>
        <taxon>Dikarya</taxon>
        <taxon>Ascomycota</taxon>
        <taxon>Pezizomycotina</taxon>
        <taxon>Eurotiomycetes</taxon>
        <taxon>Eurotiomycetidae</taxon>
        <taxon>Eurotiales</taxon>
        <taxon>Aspergillaceae</taxon>
        <taxon>Aspergillus</taxon>
        <taxon>Aspergillus subgen. Circumdati</taxon>
    </lineage>
</organism>
<accession>A0A2I1CSH9</accession>
<keyword id="KW-0012">Acyltransferase</keyword>
<keyword id="KW-0017">Alkaloid metabolism</keyword>
<keyword id="KW-0808">Transferase</keyword>
<gene>
    <name evidence="3" type="primary">cpsE</name>
    <name type="ORF">P168DRAFT_285249</name>
</gene>
<proteinExistence type="evidence at protein level"/>
<comment type="function">
    <text evidence="2">O-acetyltransferase; part of the gene cluster that mediates the biosynthesis of campesine G, a dimeric indole piperazine alkaloid that shows good insecticidal activity Galleria mellonella (PubMed:38527935). Within the pathway, cpsE acetylates N13 of campesine A to produce campesine C. CpsE produces an inseparable mixture of two acyl-atropisomers due to the spontaneous rotation of an acyl group at N13 of piperazine ring (PubMed:38527935). The non-canonical non-ribosomal peptide synthetase cpsA catalyzes the first steps of the pathway by producing L-tryptophanal and L-valinal from their respective amino-acids. These products condensate spontaneously to form trypyl-valyl pyrazine also known as didehydrocampesine A. The NmrA-like family domain-containing oxidoreductase cpsB is the next enzyme in cps pathway and reduces the unstable didehydrocampesine A to campesine A. The methyltransferase cpsF and the acetyltransferase cpsE both recognize N13 of piperazine ring to carry out methylation and acetylation of campesine A to produce campesine C and B, respectively. The cytochrome P450 monooxygenase cpsD then acts as a dimerase that catalyzes oxidative heterocoupling between campesine B and C to produce heterodimers with unexpected 6/5/6/6/6/6/5/6 eight-ring scaffold called campesine D. Finally,the cytochrome P450 monooxygenase cpsC is a regioselective dehydrogenase that catalyzes dehydrogenation reaction towards C2-N1 to produce campesine G (PubMed:38527935).</text>
</comment>
<comment type="catalytic activity">
    <reaction evidence="2">
        <text>campesine A + acetyl-CoA = campesine C + CoA</text>
        <dbReference type="Rhea" id="RHEA:82827"/>
        <dbReference type="ChEBI" id="CHEBI:57287"/>
        <dbReference type="ChEBI" id="CHEBI:57288"/>
        <dbReference type="ChEBI" id="CHEBI:232509"/>
        <dbReference type="ChEBI" id="CHEBI:232511"/>
    </reaction>
    <physiologicalReaction direction="left-to-right" evidence="2">
        <dbReference type="Rhea" id="RHEA:82828"/>
    </physiologicalReaction>
</comment>
<comment type="pathway">
    <text evidence="2">Alkaloid biosynthesis.</text>
</comment>
<comment type="biotechnology">
    <text evidence="2">Campesine G features good insecticidal activity against the global honeybee pest Galleria mellonella, which supports its future application in the development of biopesticides.</text>
</comment>
<comment type="similarity">
    <text evidence="4">Belongs to the fumigaclavine B O-acetyltransferase family.</text>
</comment>
<dbReference type="EC" id="2.3.1.-" evidence="2"/>
<dbReference type="EMBL" id="MSFM01000014">
    <property type="protein sequence ID" value="PKY00571.1"/>
    <property type="molecule type" value="Genomic_DNA"/>
</dbReference>
<dbReference type="SMR" id="A0A2I1CSH9"/>
<dbReference type="VEuPathDB" id="FungiDB:P168DRAFT_285249"/>
<dbReference type="OrthoDB" id="1862401at2759"/>
<dbReference type="Proteomes" id="UP000234254">
    <property type="component" value="Unassembled WGS sequence"/>
</dbReference>
<dbReference type="GO" id="GO:0016746">
    <property type="term" value="F:acyltransferase activity"/>
    <property type="evidence" value="ECO:0007669"/>
    <property type="project" value="UniProtKB-KW"/>
</dbReference>
<dbReference type="GO" id="GO:0009820">
    <property type="term" value="P:alkaloid metabolic process"/>
    <property type="evidence" value="ECO:0007669"/>
    <property type="project" value="UniProtKB-KW"/>
</dbReference>
<dbReference type="Gene3D" id="3.30.559.10">
    <property type="entry name" value="Chloramphenicol acetyltransferase-like domain"/>
    <property type="match status" value="2"/>
</dbReference>
<dbReference type="InterPro" id="IPR023213">
    <property type="entry name" value="CAT-like_dom_sf"/>
</dbReference>
<dbReference type="InterPro" id="IPR051283">
    <property type="entry name" value="Sec_Metabolite_Acyltrans"/>
</dbReference>
<dbReference type="PANTHER" id="PTHR31896">
    <property type="entry name" value="FAMILY REGULATORY PROTEIN, PUTATIVE (AFU_ORTHOLOGUE AFUA_3G14730)-RELATED"/>
    <property type="match status" value="1"/>
</dbReference>
<dbReference type="PANTHER" id="PTHR31896:SF64">
    <property type="entry name" value="TRICHOTHECENE 3-O-ACETYLTRANSFERASE"/>
    <property type="match status" value="1"/>
</dbReference>
<dbReference type="Pfam" id="PF02458">
    <property type="entry name" value="Transferase"/>
    <property type="match status" value="1"/>
</dbReference>
<name>CPSE_ASPC2</name>
<protein>
    <recommendedName>
        <fullName evidence="3">O-acetyltransferase cpsE</fullName>
        <ecNumber evidence="2">2.3.1.-</ecNumber>
    </recommendedName>
    <alternativeName>
        <fullName evidence="3">Campesines biosynthesis cluster protein E</fullName>
    </alternativeName>
</protein>
<feature type="chain" id="PRO_0000461453" description="O-acetyltransferase cpsE">
    <location>
        <begin position="1"/>
        <end position="496"/>
    </location>
</feature>
<feature type="region of interest" description="Disordered" evidence="1">
    <location>
        <begin position="203"/>
        <end position="228"/>
    </location>
</feature>
<feature type="compositionally biased region" description="Polar residues" evidence="1">
    <location>
        <begin position="203"/>
        <end position="217"/>
    </location>
</feature>
<sequence length="496" mass="53631">MNEFHQFEPYTLTSFDHAFPPAFYHFVALSFAIQKPQDAIPTLESAILRMVGELPFLTGEVGPCPDAKKNGVMRVQPSLNTTDKSSIVRVKEHPRFVLSSTPTPGKGTGTGQHHARCVDLSGAIVPEFDYSSISAPVFRAQINVLADGIVLCLAINHMVIDGTGTGALVDILATVCREGEGSVNYLRTCGAIQESTRRDLQDIGTQGQLPDGVQSSDDPTDGAGDIFEPGKSYANHTLVFSDAHVKALKGRCNAILAEMFPAASTGPPNPGTTVRDQRSLVSSNDVLTALLWMSISQVRSDPTQPREQSSVSVPVNTRTRFSPSLPDNYLGNAVLVTESKLALSELQCLNDDGHLGETSTQGIRLLSLLAHRVRSSIAAVDDESLRVSLRRAHHASDWETLLARPGDVVVSSLRSWNSFGLDFGPTLGGIAALELVPTFAIEGECIIKPCRCDSSGSGIWEVMVTLKPEHMHALRENQLMRCVLQCDYPVEVYRAG</sequence>